<protein>
    <recommendedName>
        <fullName evidence="1">Cytochrome c oxidase assembly protein CtaG</fullName>
    </recommendedName>
</protein>
<keyword id="KW-0997">Cell inner membrane</keyword>
<keyword id="KW-1003">Cell membrane</keyword>
<keyword id="KW-0186">Copper</keyword>
<keyword id="KW-0472">Membrane</keyword>
<keyword id="KW-1185">Reference proteome</keyword>
<keyword id="KW-0735">Signal-anchor</keyword>
<keyword id="KW-0812">Transmembrane</keyword>
<keyword id="KW-1133">Transmembrane helix</keyword>
<gene>
    <name evidence="1" type="primary">ctaG1</name>
    <name type="ordered locus">Nham_0259</name>
</gene>
<gene>
    <name evidence="1" type="primary">ctaG2</name>
    <name type="ordered locus">Nham_3459</name>
</gene>
<organism>
    <name type="scientific">Nitrobacter hamburgensis (strain DSM 10229 / NCIMB 13809 / X14)</name>
    <dbReference type="NCBI Taxonomy" id="323097"/>
    <lineage>
        <taxon>Bacteria</taxon>
        <taxon>Pseudomonadati</taxon>
        <taxon>Pseudomonadota</taxon>
        <taxon>Alphaproteobacteria</taxon>
        <taxon>Hyphomicrobiales</taxon>
        <taxon>Nitrobacteraceae</taxon>
        <taxon>Nitrobacter</taxon>
    </lineage>
</organism>
<reference key="1">
    <citation type="submission" date="2006-03" db="EMBL/GenBank/DDBJ databases">
        <title>Complete sequence of chromosome of Nitrobacter hamburgensis X14.</title>
        <authorList>
            <consortium name="US DOE Joint Genome Institute"/>
            <person name="Copeland A."/>
            <person name="Lucas S."/>
            <person name="Lapidus A."/>
            <person name="Barry K."/>
            <person name="Detter J.C."/>
            <person name="Glavina del Rio T."/>
            <person name="Hammon N."/>
            <person name="Israni S."/>
            <person name="Dalin E."/>
            <person name="Tice H."/>
            <person name="Pitluck S."/>
            <person name="Chain P."/>
            <person name="Malfatti S."/>
            <person name="Shin M."/>
            <person name="Vergez L."/>
            <person name="Schmutz J."/>
            <person name="Larimer F."/>
            <person name="Land M."/>
            <person name="Hauser L."/>
            <person name="Kyrpides N."/>
            <person name="Ivanova N."/>
            <person name="Ward B."/>
            <person name="Arp D."/>
            <person name="Klotz M."/>
            <person name="Stein L."/>
            <person name="O'Mullan G."/>
            <person name="Starkenburg S."/>
            <person name="Sayavedra L."/>
            <person name="Poret-Peterson A.T."/>
            <person name="Gentry M.E."/>
            <person name="Bruce D."/>
            <person name="Richardson P."/>
        </authorList>
    </citation>
    <scope>NUCLEOTIDE SEQUENCE [LARGE SCALE GENOMIC DNA]</scope>
    <source>
        <strain>DSM 10229 / NCIMB 13809 / X14</strain>
    </source>
</reference>
<accession>Q1QHV9</accession>
<comment type="function">
    <text evidence="1">Exerts its effect at some terminal stage of cytochrome c oxidase synthesis, probably by being involved in the insertion of the copper B into subunit I.</text>
</comment>
<comment type="subcellular location">
    <subcellularLocation>
        <location evidence="1">Cell inner membrane</location>
        <topology evidence="1">Single-pass type II membrane protein</topology>
        <orientation evidence="1">Periplasmic side</orientation>
    </subcellularLocation>
</comment>
<comment type="similarity">
    <text evidence="1">Belongs to the COX11/CtaG family.</text>
</comment>
<sequence>MTDAPQHPQQPATGTPATPKAAPRVGRDVRIGATCGLLVALMVGAAYAAVPFYNWFCRATGFNGTTQVAKVAPSAAPLARTVAVRFDSNISGGLPWKFEPEQTEINVRIGEVATVYYTVTNHAATATTGQAAYNVTPLTVGSYFTKINCFCFTEQTLAPGEKREMAVVFYVDPSFAADSENDGVRTITLSYTFFPVKDAAPKPVAASEPDRPGGSI</sequence>
<dbReference type="EMBL" id="CP000319">
    <property type="protein sequence ID" value="ABE61159.1"/>
    <property type="molecule type" value="Genomic_DNA"/>
</dbReference>
<dbReference type="EMBL" id="CP000319">
    <property type="protein sequence ID" value="ABE64188.1"/>
    <property type="molecule type" value="Genomic_DNA"/>
</dbReference>
<dbReference type="RefSeq" id="WP_011508863.1">
    <property type="nucleotide sequence ID" value="NC_007964.1"/>
</dbReference>
<dbReference type="SMR" id="Q1QHV9"/>
<dbReference type="STRING" id="323097.Nham_0259"/>
<dbReference type="KEGG" id="nha:Nham_0259"/>
<dbReference type="KEGG" id="nha:Nham_3459"/>
<dbReference type="eggNOG" id="COG3175">
    <property type="taxonomic scope" value="Bacteria"/>
</dbReference>
<dbReference type="HOGENOM" id="CLU_045000_5_0_5"/>
<dbReference type="OrthoDB" id="9804841at2"/>
<dbReference type="Proteomes" id="UP000001953">
    <property type="component" value="Chromosome"/>
</dbReference>
<dbReference type="GO" id="GO:0005886">
    <property type="term" value="C:plasma membrane"/>
    <property type="evidence" value="ECO:0007669"/>
    <property type="project" value="UniProtKB-SubCell"/>
</dbReference>
<dbReference type="GO" id="GO:0005507">
    <property type="term" value="F:copper ion binding"/>
    <property type="evidence" value="ECO:0007669"/>
    <property type="project" value="InterPro"/>
</dbReference>
<dbReference type="GO" id="GO:0008535">
    <property type="term" value="P:respiratory chain complex IV assembly"/>
    <property type="evidence" value="ECO:0007669"/>
    <property type="project" value="UniProtKB-UniRule"/>
</dbReference>
<dbReference type="FunFam" id="2.60.370.10:FF:000001">
    <property type="entry name" value="COX11 cytochrome c oxidase assembly homolog"/>
    <property type="match status" value="1"/>
</dbReference>
<dbReference type="Gene3D" id="2.60.370.10">
    <property type="entry name" value="Ctag/Cox11"/>
    <property type="match status" value="1"/>
</dbReference>
<dbReference type="HAMAP" id="MF_00155">
    <property type="entry name" value="CtaG"/>
    <property type="match status" value="1"/>
</dbReference>
<dbReference type="InterPro" id="IPR023471">
    <property type="entry name" value="CtaG/Cox11_dom_sf"/>
</dbReference>
<dbReference type="InterPro" id="IPR007533">
    <property type="entry name" value="Cyt_c_oxidase_assmbl_CtaG"/>
</dbReference>
<dbReference type="NCBIfam" id="NF003465">
    <property type="entry name" value="PRK05089.1"/>
    <property type="match status" value="1"/>
</dbReference>
<dbReference type="PANTHER" id="PTHR21320:SF3">
    <property type="entry name" value="CYTOCHROME C OXIDASE ASSEMBLY PROTEIN COX11, MITOCHONDRIAL-RELATED"/>
    <property type="match status" value="1"/>
</dbReference>
<dbReference type="PANTHER" id="PTHR21320">
    <property type="entry name" value="CYTOCHROME C OXIDASE ASSEMBLY PROTEIN COX11-RELATED"/>
    <property type="match status" value="1"/>
</dbReference>
<dbReference type="Pfam" id="PF04442">
    <property type="entry name" value="CtaG_Cox11"/>
    <property type="match status" value="1"/>
</dbReference>
<dbReference type="PIRSF" id="PIRSF005413">
    <property type="entry name" value="COX11"/>
    <property type="match status" value="1"/>
</dbReference>
<dbReference type="SUPFAM" id="SSF110111">
    <property type="entry name" value="Ctag/Cox11"/>
    <property type="match status" value="1"/>
</dbReference>
<name>COXZ_NITHX</name>
<feature type="chain" id="PRO_0000311201" description="Cytochrome c oxidase assembly protein CtaG">
    <location>
        <begin position="1"/>
        <end position="216"/>
    </location>
</feature>
<feature type="topological domain" description="Cytoplasmic" evidence="1">
    <location>
        <begin position="1"/>
        <end position="26"/>
    </location>
</feature>
<feature type="transmembrane region" description="Helical; Signal-anchor for type II membrane protein" evidence="1">
    <location>
        <begin position="27"/>
        <end position="49"/>
    </location>
</feature>
<feature type="topological domain" description="Periplasmic" evidence="1">
    <location>
        <begin position="50"/>
        <end position="216"/>
    </location>
</feature>
<feature type="region of interest" description="Disordered" evidence="2">
    <location>
        <begin position="1"/>
        <end position="24"/>
    </location>
</feature>
<feature type="compositionally biased region" description="Low complexity" evidence="2">
    <location>
        <begin position="1"/>
        <end position="23"/>
    </location>
</feature>
<proteinExistence type="inferred from homology"/>
<evidence type="ECO:0000255" key="1">
    <source>
        <dbReference type="HAMAP-Rule" id="MF_00155"/>
    </source>
</evidence>
<evidence type="ECO:0000256" key="2">
    <source>
        <dbReference type="SAM" id="MobiDB-lite"/>
    </source>
</evidence>